<organism>
    <name type="scientific">Mycobacterium tuberculosis (strain ATCC 25618 / H37Rv)</name>
    <dbReference type="NCBI Taxonomy" id="83332"/>
    <lineage>
        <taxon>Bacteria</taxon>
        <taxon>Bacillati</taxon>
        <taxon>Actinomycetota</taxon>
        <taxon>Actinomycetes</taxon>
        <taxon>Mycobacteriales</taxon>
        <taxon>Mycobacteriaceae</taxon>
        <taxon>Mycobacterium</taxon>
        <taxon>Mycobacterium tuberculosis complex</taxon>
    </lineage>
</organism>
<gene>
    <name evidence="6" type="ordered locus">Rv1057</name>
</gene>
<dbReference type="EMBL" id="AL123456">
    <property type="protein sequence ID" value="CCP43808.1"/>
    <property type="molecule type" value="Genomic_DNA"/>
</dbReference>
<dbReference type="RefSeq" id="NP_215573.1">
    <property type="nucleotide sequence ID" value="NC_000962.3"/>
</dbReference>
<dbReference type="RefSeq" id="WP_003405622.1">
    <property type="nucleotide sequence ID" value="NZ_NVQJ01000060.1"/>
</dbReference>
<dbReference type="SMR" id="O53405"/>
<dbReference type="STRING" id="83332.Rv1057"/>
<dbReference type="PaxDb" id="83332-Rv1057"/>
<dbReference type="GeneID" id="887135"/>
<dbReference type="KEGG" id="mtu:Rv1057"/>
<dbReference type="KEGG" id="mtv:RVBD_1057"/>
<dbReference type="PATRIC" id="fig|83332.111.peg.1176"/>
<dbReference type="TubercuList" id="Rv1057"/>
<dbReference type="eggNOG" id="COG3391">
    <property type="taxonomic scope" value="Bacteria"/>
</dbReference>
<dbReference type="InParanoid" id="O53405"/>
<dbReference type="OrthoDB" id="4565246at2"/>
<dbReference type="PhylomeDB" id="O53405"/>
<dbReference type="Proteomes" id="UP000001584">
    <property type="component" value="Chromosome"/>
</dbReference>
<dbReference type="Gene3D" id="2.130.10.10">
    <property type="entry name" value="YVTN repeat-like/Quinoprotein amine dehydrogenase"/>
    <property type="match status" value="2"/>
</dbReference>
<dbReference type="InterPro" id="IPR011048">
    <property type="entry name" value="Haem_d1_sf"/>
</dbReference>
<dbReference type="InterPro" id="IPR051200">
    <property type="entry name" value="Host-pathogen_enzymatic-act"/>
</dbReference>
<dbReference type="InterPro" id="IPR015943">
    <property type="entry name" value="WD40/YVTN_repeat-like_dom_sf"/>
</dbReference>
<dbReference type="PANTHER" id="PTHR47197:SF3">
    <property type="entry name" value="DIHYDRO-HEME D1 DEHYDROGENASE"/>
    <property type="match status" value="1"/>
</dbReference>
<dbReference type="PANTHER" id="PTHR47197">
    <property type="entry name" value="PROTEIN NIRF"/>
    <property type="match status" value="1"/>
</dbReference>
<dbReference type="SUPFAM" id="SSF51004">
    <property type="entry name" value="C-terminal (heme d1) domain of cytochrome cd1-nitrite reductase"/>
    <property type="match status" value="2"/>
</dbReference>
<comment type="function">
    <text evidence="4">May play an important role in host-pathogen interactions and in ESAT-6 secretion.</text>
</comment>
<comment type="induction">
    <text evidence="2 3">Expression increases during early growth in macrophages (PubMed:16352831). Expression is directly regulated by both the MprAB and TrcRS two-component systems (PubMed:16352831, PubMed:22099420). Negatively regulated by TrcS/TrcR (PubMed:16352831). Activated by MprA/MprB under envelope stress (PubMed:22099420). Expression may also be regulated by sigma E (PubMed:16352831).</text>
</comment>
<comment type="disruption phenotype">
    <text evidence="4">Deletion of the gene does not affect the synthesis of the major virulence factor ESAT-6, but greatly reduces its secretion. In infected macrophages, Rv1057 deletion significantly reduces the secretion levels of cytokines IL-1 beta, IL-10, TNF-alpha, and INF-gamma, but does not affect IL-4 and IL-8 levels. Deletion of Rv1057 greatly impairs the ability of M.tuberculosis to replicate in macrophages.</text>
</comment>
<sequence>MSVMNGREVARESRDAQVFEFGTAPGSAVVKIPVQGGPIGGIAISRDGSLLVVTNNGTDTVSVVGTDTCRVTQTVTSVNEPFAIAMGNAEANRAYVSTVSSAYDAIAVIDVATNTVLGTHPLALSVSDLTLSPDDKYLYVSRNGTRGADVAVLDTTTGALIDVVDVSQAPGTTTQCVRMSPDGSVLYVGANGPSGGLLVVITTRAQSDGGRIGSRSRSRQKSSKPRGNQAAAGLRVVATIDIGSSVRDVALSPDGAIAYVASCGSDFGAVVDVIDTRTHQITSSRAISEIGGLVTRVSVSGDADRAYLVSEDRVTVLCTRTHDVIGTIRTGQPSCVVESPDGKYLYIADYSGTITRTAVASTIVSGTEQLALQRRGSMQWFSPELQQYAPALA</sequence>
<evidence type="ECO:0000256" key="1">
    <source>
        <dbReference type="SAM" id="MobiDB-lite"/>
    </source>
</evidence>
<evidence type="ECO:0000269" key="2">
    <source>
    </source>
</evidence>
<evidence type="ECO:0000269" key="3">
    <source>
    </source>
</evidence>
<evidence type="ECO:0000269" key="4">
    <source>
    </source>
</evidence>
<evidence type="ECO:0000303" key="5">
    <source>
    </source>
</evidence>
<evidence type="ECO:0000312" key="6">
    <source>
        <dbReference type="EMBL" id="CCP43808.1"/>
    </source>
</evidence>
<evidence type="ECO:0007744" key="7">
    <source>
    </source>
</evidence>
<protein>
    <recommendedName>
        <fullName evidence="5">Seven-bladed beta-propeller protein Rv1057</fullName>
    </recommendedName>
</protein>
<name>Y1057_MYCTU</name>
<proteinExistence type="evidence at protein level"/>
<accession>O53405</accession>
<accession>I6Y5H9</accession>
<accession>L0T8B2</accession>
<reference key="1">
    <citation type="journal article" date="1998" name="Nature">
        <title>Deciphering the biology of Mycobacterium tuberculosis from the complete genome sequence.</title>
        <authorList>
            <person name="Cole S.T."/>
            <person name="Brosch R."/>
            <person name="Parkhill J."/>
            <person name="Garnier T."/>
            <person name="Churcher C.M."/>
            <person name="Harris D.E."/>
            <person name="Gordon S.V."/>
            <person name="Eiglmeier K."/>
            <person name="Gas S."/>
            <person name="Barry C.E. III"/>
            <person name="Tekaia F."/>
            <person name="Badcock K."/>
            <person name="Basham D."/>
            <person name="Brown D."/>
            <person name="Chillingworth T."/>
            <person name="Connor R."/>
            <person name="Davies R.M."/>
            <person name="Devlin K."/>
            <person name="Feltwell T."/>
            <person name="Gentles S."/>
            <person name="Hamlin N."/>
            <person name="Holroyd S."/>
            <person name="Hornsby T."/>
            <person name="Jagels K."/>
            <person name="Krogh A."/>
            <person name="McLean J."/>
            <person name="Moule S."/>
            <person name="Murphy L.D."/>
            <person name="Oliver S."/>
            <person name="Osborne J."/>
            <person name="Quail M.A."/>
            <person name="Rajandream M.A."/>
            <person name="Rogers J."/>
            <person name="Rutter S."/>
            <person name="Seeger K."/>
            <person name="Skelton S."/>
            <person name="Squares S."/>
            <person name="Squares R."/>
            <person name="Sulston J.E."/>
            <person name="Taylor K."/>
            <person name="Whitehead S."/>
            <person name="Barrell B.G."/>
        </authorList>
    </citation>
    <scope>NUCLEOTIDE SEQUENCE [LARGE SCALE GENOMIC DNA]</scope>
    <source>
        <strain>ATCC 25618 / H37Rv</strain>
    </source>
</reference>
<reference key="2">
    <citation type="journal article" date="2006" name="J. Bacteriol.">
        <title>The Mycobacterium tuberculosis TrcR response regulator represses transcription of the intracellularly expressed Rv1057 gene, encoding a seven-bladed beta-propeller.</title>
        <authorList>
            <person name="Haydel S.E."/>
            <person name="Clark-Curtiss J.E."/>
        </authorList>
    </citation>
    <scope>INDUCTION</scope>
</reference>
<reference evidence="7" key="3">
    <citation type="journal article" date="2011" name="Mol. Cell. Proteomics">
        <title>Proteogenomic analysis of Mycobacterium tuberculosis by high resolution mass spectrometry.</title>
        <authorList>
            <person name="Kelkar D.S."/>
            <person name="Kumar D."/>
            <person name="Kumar P."/>
            <person name="Balakrishnan L."/>
            <person name="Muthusamy B."/>
            <person name="Yadav A.K."/>
            <person name="Shrivastava P."/>
            <person name="Marimuthu A."/>
            <person name="Anand S."/>
            <person name="Sundaram H."/>
            <person name="Kingsbury R."/>
            <person name="Harsha H.C."/>
            <person name="Nair B."/>
            <person name="Prasad T.S."/>
            <person name="Chauhan D.S."/>
            <person name="Katoch K."/>
            <person name="Katoch V.M."/>
            <person name="Kumar P."/>
            <person name="Chaerkady R."/>
            <person name="Ramachandran S."/>
            <person name="Dash D."/>
            <person name="Pandey A."/>
        </authorList>
    </citation>
    <scope>IDENTIFICATION BY MASS SPECTROMETRY [LARGE SCALE ANALYSIS]</scope>
</reference>
<reference key="4">
    <citation type="journal article" date="2011" name="Tuberculosis">
        <title>The beta-propeller gene Rv1057 of Mycobacterium tuberculosis has a complex promoter directly regulated by both the MprAB and TrcRS two-component systems.</title>
        <authorList>
            <person name="Pang X."/>
            <person name="Cao G."/>
            <person name="Neuenschwander P.F."/>
            <person name="Haydel S.E."/>
            <person name="Hou G."/>
            <person name="Howard S.T."/>
        </authorList>
    </citation>
    <scope>INDUCTION</scope>
</reference>
<reference key="5">
    <citation type="journal article" date="2018" name="Curr. Microbiol.">
        <title>Deletion of the beta-propeller protein gene Rv1057 reduces ESAT-6 secretion and intracellular growth of Mycobacterium tuberculosis.</title>
        <authorList>
            <person name="Fu J."/>
            <person name="Zong G."/>
            <person name="Zhang P."/>
            <person name="Gu Y."/>
            <person name="Cao G."/>
        </authorList>
    </citation>
    <scope>FUNCTION</scope>
    <scope>DISRUPTION PHENOTYPE</scope>
    <source>
        <strain>H37Rv</strain>
    </source>
</reference>
<feature type="chain" id="PRO_0000451064" description="Seven-bladed beta-propeller protein Rv1057">
    <location>
        <begin position="1"/>
        <end position="393"/>
    </location>
</feature>
<feature type="region of interest" description="Disordered" evidence="1">
    <location>
        <begin position="208"/>
        <end position="230"/>
    </location>
</feature>
<feature type="compositionally biased region" description="Basic residues" evidence="1">
    <location>
        <begin position="214"/>
        <end position="224"/>
    </location>
</feature>
<keyword id="KW-1185">Reference proteome</keyword>
<keyword id="KW-0346">Stress response</keyword>
<keyword id="KW-0843">Virulence</keyword>